<sequence length="490" mass="54965">MERAKSRKPHIMMIPYPLQGHVIPFVHLAIKLASHGFTITFVNTDSIHHHISTAHQDDAGDIFSAARSSGQHDIRYTTVSDGFPLDFDRSLNHDQFFEGILHVFSAHVDDLIAKLSRRDDPPVTCLIADTFYVWSSMICDKHNLVNVSFWTEPALVLNLYYHMDLLISNGHFKSLDNRKDVIDYVPGVKAIEPKDLMSYLQVSDKDVDTNTVVYRILFKAFKDVKRADFVVCNTVQELEPDSLSALQAKQPVYAIGPVFSTDSVVPTSLWAESDCTEWLKGRPTGSVLYVSFGSYAHVGKKEIVEIAHGLLLSGISFIWVLRPDIVGSNVPDFLPAGFVDQAQDRGLVVQWCCQMEVISNPAVGGFFTHCGWNSILESVWCGLPLLCYPLLTDQFTNRKLVVDDWCIGINLCEKKTITRDQVSANVKRLMNGETSSELRNNVEKVKRHLKDAVTTVGSSETNFNLFVSEVRNRIETKLCNVNGLEISPSN</sequence>
<organism>
    <name type="scientific">Arabidopsis thaliana</name>
    <name type="common">Mouse-ear cress</name>
    <dbReference type="NCBI Taxonomy" id="3702"/>
    <lineage>
        <taxon>Eukaryota</taxon>
        <taxon>Viridiplantae</taxon>
        <taxon>Streptophyta</taxon>
        <taxon>Embryophyta</taxon>
        <taxon>Tracheophyta</taxon>
        <taxon>Spermatophyta</taxon>
        <taxon>Magnoliopsida</taxon>
        <taxon>eudicotyledons</taxon>
        <taxon>Gunneridae</taxon>
        <taxon>Pentapetalae</taxon>
        <taxon>rosids</taxon>
        <taxon>malvids</taxon>
        <taxon>Brassicales</taxon>
        <taxon>Brassicaceae</taxon>
        <taxon>Camelineae</taxon>
        <taxon>Arabidopsis</taxon>
    </lineage>
</organism>
<keyword id="KW-0328">Glycosyltransferase</keyword>
<keyword id="KW-1185">Reference proteome</keyword>
<keyword id="KW-0808">Transferase</keyword>
<evidence type="ECO:0000250" key="1"/>
<evidence type="ECO:0000305" key="2"/>
<feature type="chain" id="PRO_0000409131" description="UDP-glycosyltransferase 86A1">
    <location>
        <begin position="1"/>
        <end position="490"/>
    </location>
</feature>
<feature type="binding site" evidence="1">
    <location>
        <position position="294"/>
    </location>
    <ligand>
        <name>UDP-alpha-D-glucose</name>
        <dbReference type="ChEBI" id="CHEBI:58885"/>
    </ligand>
</feature>
<feature type="binding site" evidence="1">
    <location>
        <begin position="352"/>
        <end position="354"/>
    </location>
    <ligand>
        <name>UDP-alpha-D-glucose</name>
        <dbReference type="ChEBI" id="CHEBI:58885"/>
    </ligand>
</feature>
<feature type="binding site" evidence="1">
    <location>
        <begin position="369"/>
        <end position="377"/>
    </location>
    <ligand>
        <name>UDP-alpha-D-glucose</name>
        <dbReference type="ChEBI" id="CHEBI:58885"/>
    </ligand>
</feature>
<feature type="binding site" evidence="1">
    <location>
        <begin position="391"/>
        <end position="394"/>
    </location>
    <ligand>
        <name>UDP-alpha-D-glucose</name>
        <dbReference type="ChEBI" id="CHEBI:58885"/>
    </ligand>
</feature>
<accession>Q9SJL0</accession>
<dbReference type="EC" id="2.4.1.-"/>
<dbReference type="EMBL" id="AC006922">
    <property type="protein sequence ID" value="AAD31582.1"/>
    <property type="molecule type" value="Genomic_DNA"/>
</dbReference>
<dbReference type="EMBL" id="CP002685">
    <property type="protein sequence ID" value="AEC09329.1"/>
    <property type="molecule type" value="Genomic_DNA"/>
</dbReference>
<dbReference type="EMBL" id="AY054265">
    <property type="protein sequence ID" value="AAL06924.1"/>
    <property type="molecule type" value="mRNA"/>
</dbReference>
<dbReference type="EMBL" id="AY133523">
    <property type="protein sequence ID" value="AAM91353.1"/>
    <property type="molecule type" value="mRNA"/>
</dbReference>
<dbReference type="PIR" id="H84786">
    <property type="entry name" value="H84786"/>
</dbReference>
<dbReference type="RefSeq" id="NP_181234.1">
    <property type="nucleotide sequence ID" value="NM_129253.3"/>
</dbReference>
<dbReference type="SMR" id="Q9SJL0"/>
<dbReference type="FunCoup" id="Q9SJL0">
    <property type="interactions" value="123"/>
</dbReference>
<dbReference type="STRING" id="3702.Q9SJL0"/>
<dbReference type="CAZy" id="GT1">
    <property type="family name" value="Glycosyltransferase Family 1"/>
</dbReference>
<dbReference type="PaxDb" id="3702-AT2G36970.1"/>
<dbReference type="ProteomicsDB" id="228683"/>
<dbReference type="EnsemblPlants" id="AT2G36970.1">
    <property type="protein sequence ID" value="AT2G36970.1"/>
    <property type="gene ID" value="AT2G36970"/>
</dbReference>
<dbReference type="GeneID" id="818271"/>
<dbReference type="Gramene" id="AT2G36970.1">
    <property type="protein sequence ID" value="AT2G36970.1"/>
    <property type="gene ID" value="AT2G36970"/>
</dbReference>
<dbReference type="KEGG" id="ath:AT2G36970"/>
<dbReference type="Araport" id="AT2G36970"/>
<dbReference type="TAIR" id="AT2G36970"/>
<dbReference type="eggNOG" id="KOG1192">
    <property type="taxonomic scope" value="Eukaryota"/>
</dbReference>
<dbReference type="HOGENOM" id="CLU_001724_0_3_1"/>
<dbReference type="InParanoid" id="Q9SJL0"/>
<dbReference type="OMA" id="NFHQFME"/>
<dbReference type="PhylomeDB" id="Q9SJL0"/>
<dbReference type="BioCyc" id="ARA:AT2G36970-MONOMER"/>
<dbReference type="PRO" id="PR:Q9SJL0"/>
<dbReference type="Proteomes" id="UP000006548">
    <property type="component" value="Chromosome 2"/>
</dbReference>
<dbReference type="ExpressionAtlas" id="Q9SJL0">
    <property type="expression patterns" value="baseline and differential"/>
</dbReference>
<dbReference type="GO" id="GO:0035251">
    <property type="term" value="F:UDP-glucosyltransferase activity"/>
    <property type="evidence" value="ECO:0007669"/>
    <property type="project" value="UniProtKB-ARBA"/>
</dbReference>
<dbReference type="CDD" id="cd03784">
    <property type="entry name" value="GT1_Gtf-like"/>
    <property type="match status" value="1"/>
</dbReference>
<dbReference type="FunFam" id="3.40.50.2000:FF:000078">
    <property type="entry name" value="Glycosyltransferase"/>
    <property type="match status" value="1"/>
</dbReference>
<dbReference type="FunFam" id="3.40.50.2000:FF:000178">
    <property type="entry name" value="Glycosyltransferase"/>
    <property type="match status" value="1"/>
</dbReference>
<dbReference type="Gene3D" id="3.40.50.2000">
    <property type="entry name" value="Glycogen Phosphorylase B"/>
    <property type="match status" value="2"/>
</dbReference>
<dbReference type="InterPro" id="IPR002213">
    <property type="entry name" value="UDP_glucos_trans"/>
</dbReference>
<dbReference type="InterPro" id="IPR035595">
    <property type="entry name" value="UDP_glycos_trans_CS"/>
</dbReference>
<dbReference type="PANTHER" id="PTHR11926">
    <property type="entry name" value="GLUCOSYL/GLUCURONOSYL TRANSFERASES"/>
    <property type="match status" value="1"/>
</dbReference>
<dbReference type="PANTHER" id="PTHR11926:SF774">
    <property type="entry name" value="UDP-GLYCOSYLTRANSFERASE 85A1-RELATED"/>
    <property type="match status" value="1"/>
</dbReference>
<dbReference type="Pfam" id="PF00201">
    <property type="entry name" value="UDPGT"/>
    <property type="match status" value="1"/>
</dbReference>
<dbReference type="SUPFAM" id="SSF53756">
    <property type="entry name" value="UDP-Glycosyltransferase/glycogen phosphorylase"/>
    <property type="match status" value="1"/>
</dbReference>
<dbReference type="PROSITE" id="PS00375">
    <property type="entry name" value="UDPGT"/>
    <property type="match status" value="1"/>
</dbReference>
<name>U86A1_ARATH</name>
<gene>
    <name type="primary">UGT86A1</name>
    <name type="ordered locus">At2g36970</name>
    <name type="ORF">T1J8.15</name>
</gene>
<protein>
    <recommendedName>
        <fullName>UDP-glycosyltransferase 86A1</fullName>
        <ecNumber>2.4.1.-</ecNumber>
    </recommendedName>
</protein>
<comment type="similarity">
    <text evidence="2">Belongs to the UDP-glycosyltransferase family.</text>
</comment>
<proteinExistence type="evidence at transcript level"/>
<reference key="1">
    <citation type="journal article" date="1999" name="Nature">
        <title>Sequence and analysis of chromosome 2 of the plant Arabidopsis thaliana.</title>
        <authorList>
            <person name="Lin X."/>
            <person name="Kaul S."/>
            <person name="Rounsley S.D."/>
            <person name="Shea T.P."/>
            <person name="Benito M.-I."/>
            <person name="Town C.D."/>
            <person name="Fujii C.Y."/>
            <person name="Mason T.M."/>
            <person name="Bowman C.L."/>
            <person name="Barnstead M.E."/>
            <person name="Feldblyum T.V."/>
            <person name="Buell C.R."/>
            <person name="Ketchum K.A."/>
            <person name="Lee J.J."/>
            <person name="Ronning C.M."/>
            <person name="Koo H.L."/>
            <person name="Moffat K.S."/>
            <person name="Cronin L.A."/>
            <person name="Shen M."/>
            <person name="Pai G."/>
            <person name="Van Aken S."/>
            <person name="Umayam L."/>
            <person name="Tallon L.J."/>
            <person name="Gill J.E."/>
            <person name="Adams M.D."/>
            <person name="Carrera A.J."/>
            <person name="Creasy T.H."/>
            <person name="Goodman H.M."/>
            <person name="Somerville C.R."/>
            <person name="Copenhaver G.P."/>
            <person name="Preuss D."/>
            <person name="Nierman W.C."/>
            <person name="White O."/>
            <person name="Eisen J.A."/>
            <person name="Salzberg S.L."/>
            <person name="Fraser C.M."/>
            <person name="Venter J.C."/>
        </authorList>
    </citation>
    <scope>NUCLEOTIDE SEQUENCE [LARGE SCALE GENOMIC DNA]</scope>
    <source>
        <strain>cv. Columbia</strain>
    </source>
</reference>
<reference key="2">
    <citation type="journal article" date="2017" name="Plant J.">
        <title>Araport11: a complete reannotation of the Arabidopsis thaliana reference genome.</title>
        <authorList>
            <person name="Cheng C.Y."/>
            <person name="Krishnakumar V."/>
            <person name="Chan A.P."/>
            <person name="Thibaud-Nissen F."/>
            <person name="Schobel S."/>
            <person name="Town C.D."/>
        </authorList>
    </citation>
    <scope>GENOME REANNOTATION</scope>
    <source>
        <strain>cv. Columbia</strain>
    </source>
</reference>
<reference key="3">
    <citation type="journal article" date="2003" name="Science">
        <title>Empirical analysis of transcriptional activity in the Arabidopsis genome.</title>
        <authorList>
            <person name="Yamada K."/>
            <person name="Lim J."/>
            <person name="Dale J.M."/>
            <person name="Chen H."/>
            <person name="Shinn P."/>
            <person name="Palm C.J."/>
            <person name="Southwick A.M."/>
            <person name="Wu H.C."/>
            <person name="Kim C.J."/>
            <person name="Nguyen M."/>
            <person name="Pham P.K."/>
            <person name="Cheuk R.F."/>
            <person name="Karlin-Newmann G."/>
            <person name="Liu S.X."/>
            <person name="Lam B."/>
            <person name="Sakano H."/>
            <person name="Wu T."/>
            <person name="Yu G."/>
            <person name="Miranda M."/>
            <person name="Quach H.L."/>
            <person name="Tripp M."/>
            <person name="Chang C.H."/>
            <person name="Lee J.M."/>
            <person name="Toriumi M.J."/>
            <person name="Chan M.M."/>
            <person name="Tang C.C."/>
            <person name="Onodera C.S."/>
            <person name="Deng J.M."/>
            <person name="Akiyama K."/>
            <person name="Ansari Y."/>
            <person name="Arakawa T."/>
            <person name="Banh J."/>
            <person name="Banno F."/>
            <person name="Bowser L."/>
            <person name="Brooks S.Y."/>
            <person name="Carninci P."/>
            <person name="Chao Q."/>
            <person name="Choy N."/>
            <person name="Enju A."/>
            <person name="Goldsmith A.D."/>
            <person name="Gurjal M."/>
            <person name="Hansen N.F."/>
            <person name="Hayashizaki Y."/>
            <person name="Johnson-Hopson C."/>
            <person name="Hsuan V.W."/>
            <person name="Iida K."/>
            <person name="Karnes M."/>
            <person name="Khan S."/>
            <person name="Koesema E."/>
            <person name="Ishida J."/>
            <person name="Jiang P.X."/>
            <person name="Jones T."/>
            <person name="Kawai J."/>
            <person name="Kamiya A."/>
            <person name="Meyers C."/>
            <person name="Nakajima M."/>
            <person name="Narusaka M."/>
            <person name="Seki M."/>
            <person name="Sakurai T."/>
            <person name="Satou M."/>
            <person name="Tamse R."/>
            <person name="Vaysberg M."/>
            <person name="Wallender E.K."/>
            <person name="Wong C."/>
            <person name="Yamamura Y."/>
            <person name="Yuan S."/>
            <person name="Shinozaki K."/>
            <person name="Davis R.W."/>
            <person name="Theologis A."/>
            <person name="Ecker J.R."/>
        </authorList>
    </citation>
    <scope>NUCLEOTIDE SEQUENCE [LARGE SCALE MRNA]</scope>
    <source>
        <strain>cv. Columbia</strain>
    </source>
</reference>
<reference key="4">
    <citation type="journal article" date="2001" name="J. Biol. Chem.">
        <title>Phylogenetic analysis of the UDP-glycosyltransferase multigene family of Arabidopsis thaliana.</title>
        <authorList>
            <person name="Li Y."/>
            <person name="Baldauf S."/>
            <person name="Lim E.K."/>
            <person name="Bowles D.J."/>
        </authorList>
    </citation>
    <scope>GENE FAMILY</scope>
</reference>